<gene>
    <name type="ordered locus">MIMI_R653</name>
</gene>
<organismHost>
    <name type="scientific">Acanthamoeba polyphaga</name>
    <name type="common">Amoeba</name>
    <dbReference type="NCBI Taxonomy" id="5757"/>
</organismHost>
<accession>Q5UQ64</accession>
<dbReference type="EMBL" id="AY653733">
    <property type="protein sequence ID" value="AAV50914.1"/>
    <property type="molecule type" value="Genomic_DNA"/>
</dbReference>
<dbReference type="KEGG" id="vg:9925298"/>
<dbReference type="OrthoDB" id="12995at10239"/>
<dbReference type="Proteomes" id="UP000001134">
    <property type="component" value="Genome"/>
</dbReference>
<dbReference type="GO" id="GO:0044423">
    <property type="term" value="C:virion component"/>
    <property type="evidence" value="ECO:0007669"/>
    <property type="project" value="UniProtKB-KW"/>
</dbReference>
<protein>
    <recommendedName>
        <fullName>Uncharacterized protein R653</fullName>
    </recommendedName>
</protein>
<organism>
    <name type="scientific">Acanthamoeba polyphaga mimivirus</name>
    <name type="common">APMV</name>
    <dbReference type="NCBI Taxonomy" id="212035"/>
    <lineage>
        <taxon>Viruses</taxon>
        <taxon>Varidnaviria</taxon>
        <taxon>Bamfordvirae</taxon>
        <taxon>Nucleocytoviricota</taxon>
        <taxon>Megaviricetes</taxon>
        <taxon>Imitervirales</taxon>
        <taxon>Mimiviridae</taxon>
        <taxon>Megamimivirinae</taxon>
        <taxon>Mimivirus</taxon>
        <taxon>Mimivirus bradfordmassiliense</taxon>
    </lineage>
</organism>
<reference key="1">
    <citation type="journal article" date="2004" name="Science">
        <title>The 1.2-megabase genome sequence of Mimivirus.</title>
        <authorList>
            <person name="Raoult D."/>
            <person name="Audic S."/>
            <person name="Robert C."/>
            <person name="Abergel C."/>
            <person name="Renesto P."/>
            <person name="Ogata H."/>
            <person name="La Scola B."/>
            <person name="Susan M."/>
            <person name="Claverie J.-M."/>
        </authorList>
    </citation>
    <scope>NUCLEOTIDE SEQUENCE [LARGE SCALE GENOMIC DNA]</scope>
    <source>
        <strain>Rowbotham-Bradford</strain>
    </source>
</reference>
<reference key="2">
    <citation type="journal article" date="2006" name="J. Virol.">
        <title>Mimivirus giant particles incorporate a large fraction of anonymous and unique gene products.</title>
        <authorList>
            <person name="Renesto P."/>
            <person name="Abergel C."/>
            <person name="Decloquement P."/>
            <person name="Moinier D."/>
            <person name="Azza S."/>
            <person name="Ogata H."/>
            <person name="Fourquet P."/>
            <person name="Gorvel J.-P."/>
            <person name="Claverie J.-M."/>
            <person name="Raoult D."/>
        </authorList>
    </citation>
    <scope>IDENTIFICATION BY MASS SPECTROMETRY [LARGE SCALE ANALYSIS]</scope>
    <scope>SUBCELLULAR LOCATION</scope>
</reference>
<proteinExistence type="evidence at protein level"/>
<name>YR653_MIMIV</name>
<comment type="subcellular location">
    <subcellularLocation>
        <location evidence="1">Virion</location>
    </subcellularLocation>
</comment>
<keyword id="KW-1185">Reference proteome</keyword>
<keyword id="KW-0946">Virion</keyword>
<evidence type="ECO:0000269" key="1">
    <source>
    </source>
</evidence>
<feature type="chain" id="PRO_0000244051" description="Uncharacterized protein R653">
    <location>
        <begin position="1"/>
        <end position="227"/>
    </location>
</feature>
<sequence>MDSYEPSQLIWARLLLYEISKRNGETEYQHTNGPVWWGPNDNKTVYLSITDCSGFVNALLRKSFELSQKDMVEWFDSQRPLAVDYYNTIYHQNGFTRIKNIYKLEPGDFIAIKFPNHHPSLDDTGHIMMINSYPEIMASKNLPDEYQNYNNILQFRVNVIDQTATPHGRYDTRYSPDDNQNGLGSGYIKLYTNIDGTIIGYSWSLSKKSRYIDKTVHPIVVGRLDIY</sequence>